<protein>
    <recommendedName>
        <fullName evidence="7">PWWP domain-containing protein 3</fullName>
    </recommendedName>
</protein>
<evidence type="ECO:0000255" key="1"/>
<evidence type="ECO:0000255" key="2">
    <source>
        <dbReference type="PROSITE-ProRule" id="PRU00162"/>
    </source>
</evidence>
<evidence type="ECO:0000255" key="3">
    <source>
        <dbReference type="PROSITE-ProRule" id="PRU00768"/>
    </source>
</evidence>
<evidence type="ECO:0000256" key="4">
    <source>
        <dbReference type="SAM" id="MobiDB-lite"/>
    </source>
</evidence>
<evidence type="ECO:0000269" key="5">
    <source>
    </source>
</evidence>
<evidence type="ECO:0000269" key="6">
    <source>
    </source>
</evidence>
<evidence type="ECO:0000303" key="7">
    <source>
    </source>
</evidence>
<evidence type="ECO:0000305" key="8"/>
<evidence type="ECO:0000312" key="9">
    <source>
        <dbReference type="Araport" id="AT5G40340"/>
    </source>
</evidence>
<evidence type="ECO:0000312" key="10">
    <source>
        <dbReference type="EMBL" id="BAB11589.1"/>
    </source>
</evidence>
<sequence>MEIEVVLGIGEDAGPKPCSAEIESAEKTLKDDGVVQENGVRVSDNGEKKSDVVVDVDEKNEKNLNESGVIEDCVMNGVSSLLKLKEDVEEEEEEEEEEEEEEEDGEDEEEEEEEEEEEEEEEHGYCVGDFVWGKIKNHPWWPGQIYDPSDASDLALKIKQKGKLLVACFGDGTFAWCGASQLKPFAESFKECSKVSNSRSFLGAVEEAVEEIGRHIERVLVCDCAEEKKHEFDSPLVNNAGIKEGVLVRDVRREMISSLLIGKHGEILKDVKSFAETVSFSGLLELEILKRKVSAFYRSNRGYGLTEYHEPQSVPGLEDKNNDDDDDDEEKNVNDGLQWRAKRSRVEEVAALDHEESSSLQRSLEKCSGFPDHRLPHRRKEKSITEIIEKESAAKVRFETEPADGDVKSNVKSGRKKTKRHDEVNGDLENVTTTALWRRRKSEVATIEDGGNKQVVESSKGKTSRKKKKMDVDDGDDDGSGDKEESEEKEISDLEINIDSTSLASLRKKVRFDDSVVERSTENGETATQTSKRERKKSKYLSPDFLSDFSRKGRKKSTIESESSKVSSQSQVDERVTDASDSLMEVEEDTLDKPCEPSSDNGLGQEELSRELSNAVDFLRLGATPKEMQDLIRVAALGTQYPKDSSSRDMVREFMTIYRSFTYHDGANHKFLGSYDSSDKEKEELSEMGKPVTKGKEKKDKKGKAKQKAEEIEVTGKEENETDKHGKMKKERKRKKSESKKEGGEGEETQKEANESTKKERKRKKSESKKQSDGEEETQKEPSESTKKERKRKNPESKKKAEAVEEEETRKESVESTKKERKRKKPKHDEEEVPNETEKPEKKKKKKREGKSKKKETETEFSGAELYVTFGPGSSLPKKEDLIEIYEKFGALDKERTDTVDNNFSAHVAFLDVADGEKAFESSLEKCPFTSNSTVKFRLKYPNERTEEKKTEAEVAETTMEVEYLKKKLDEMKLLLDGCEGGMTEEVKVKLEGEMVNLLEKVIEMRSS</sequence>
<name>PDP3_ARATH</name>
<proteinExistence type="evidence at protein level"/>
<dbReference type="EMBL" id="AB006702">
    <property type="protein sequence ID" value="BAB11589.1"/>
    <property type="molecule type" value="Genomic_DNA"/>
</dbReference>
<dbReference type="EMBL" id="CP002688">
    <property type="protein sequence ID" value="AED94535.1"/>
    <property type="molecule type" value="Genomic_DNA"/>
</dbReference>
<dbReference type="RefSeq" id="NP_198850.1">
    <property type="nucleotide sequence ID" value="NM_123398.3"/>
</dbReference>
<dbReference type="FunCoup" id="Q9FNE4">
    <property type="interactions" value="477"/>
</dbReference>
<dbReference type="IntAct" id="Q9FNE4">
    <property type="interactions" value="2"/>
</dbReference>
<dbReference type="STRING" id="3702.Q9FNE4"/>
<dbReference type="iPTMnet" id="Q9FNE4"/>
<dbReference type="PaxDb" id="3702-AT5G40340.1"/>
<dbReference type="ProteomicsDB" id="177474"/>
<dbReference type="EnsemblPlants" id="AT5G40340.1">
    <property type="protein sequence ID" value="AT5G40340.1"/>
    <property type="gene ID" value="AT5G40340"/>
</dbReference>
<dbReference type="GeneID" id="834032"/>
<dbReference type="Gramene" id="AT5G40340.1">
    <property type="protein sequence ID" value="AT5G40340.1"/>
    <property type="gene ID" value="AT5G40340"/>
</dbReference>
<dbReference type="KEGG" id="ath:AT5G40340"/>
<dbReference type="Araport" id="AT5G40340"/>
<dbReference type="TAIR" id="AT5G40340">
    <property type="gene designation" value="PDP3"/>
</dbReference>
<dbReference type="eggNOG" id="ENOG502QQX0">
    <property type="taxonomic scope" value="Eukaryota"/>
</dbReference>
<dbReference type="HOGENOM" id="CLU_007246_0_0_1"/>
<dbReference type="InParanoid" id="Q9FNE4"/>
<dbReference type="PhylomeDB" id="Q9FNE4"/>
<dbReference type="CD-CODE" id="4299E36E">
    <property type="entry name" value="Nucleolus"/>
</dbReference>
<dbReference type="PRO" id="PR:Q9FNE4"/>
<dbReference type="Proteomes" id="UP000006548">
    <property type="component" value="Chromosome 5"/>
</dbReference>
<dbReference type="ExpressionAtlas" id="Q9FNE4">
    <property type="expression patterns" value="baseline and differential"/>
</dbReference>
<dbReference type="GO" id="GO:0035098">
    <property type="term" value="C:ESC/E(Z) complex"/>
    <property type="evidence" value="ECO:0000314"/>
    <property type="project" value="UniProtKB"/>
</dbReference>
<dbReference type="GO" id="GO:0005730">
    <property type="term" value="C:nucleolus"/>
    <property type="evidence" value="ECO:0007005"/>
    <property type="project" value="TAIR"/>
</dbReference>
<dbReference type="GO" id="GO:0009506">
    <property type="term" value="C:plasmodesma"/>
    <property type="evidence" value="ECO:0007005"/>
    <property type="project" value="TAIR"/>
</dbReference>
<dbReference type="GO" id="GO:0040029">
    <property type="term" value="P:epigenetic regulation of gene expression"/>
    <property type="evidence" value="ECO:0000315"/>
    <property type="project" value="UniProtKB"/>
</dbReference>
<dbReference type="GO" id="GO:0009908">
    <property type="term" value="P:flower development"/>
    <property type="evidence" value="ECO:0007669"/>
    <property type="project" value="UniProtKB-KW"/>
</dbReference>
<dbReference type="GO" id="GO:0006355">
    <property type="term" value="P:regulation of DNA-templated transcription"/>
    <property type="evidence" value="ECO:0000315"/>
    <property type="project" value="UniProtKB"/>
</dbReference>
<dbReference type="GO" id="GO:2000028">
    <property type="term" value="P:regulation of photoperiodism, flowering"/>
    <property type="evidence" value="ECO:0000315"/>
    <property type="project" value="UniProtKB"/>
</dbReference>
<dbReference type="CDD" id="cd05162">
    <property type="entry name" value="PWWP"/>
    <property type="match status" value="1"/>
</dbReference>
<dbReference type="FunFam" id="2.30.30.140:FF:000115">
    <property type="entry name" value="Tudor/PWWP/MBT superfamily protein"/>
    <property type="match status" value="1"/>
</dbReference>
<dbReference type="Gene3D" id="2.30.30.140">
    <property type="match status" value="1"/>
</dbReference>
<dbReference type="InterPro" id="IPR052657">
    <property type="entry name" value="PDP_family_Arabidopsis"/>
</dbReference>
<dbReference type="InterPro" id="IPR000313">
    <property type="entry name" value="PWWP_dom"/>
</dbReference>
<dbReference type="PANTHER" id="PTHR10688">
    <property type="entry name" value="PWWP DOMAIN-CONTAINING PROTEIN"/>
    <property type="match status" value="1"/>
</dbReference>
<dbReference type="PANTHER" id="PTHR10688:SF16">
    <property type="entry name" value="PWWP DOMAIN-CONTAINING PROTEIN 3"/>
    <property type="match status" value="1"/>
</dbReference>
<dbReference type="Pfam" id="PF00855">
    <property type="entry name" value="PWWP"/>
    <property type="match status" value="1"/>
</dbReference>
<dbReference type="SMART" id="SM00293">
    <property type="entry name" value="PWWP"/>
    <property type="match status" value="1"/>
</dbReference>
<dbReference type="SUPFAM" id="SSF63748">
    <property type="entry name" value="Tudor/PWWP/MBT"/>
    <property type="match status" value="1"/>
</dbReference>
<dbReference type="PROSITE" id="PS50812">
    <property type="entry name" value="PWWP"/>
    <property type="match status" value="1"/>
</dbReference>
<accession>Q9FNE4</accession>
<feature type="chain" id="PRO_0000453271" description="PWWP domain-containing protein 3">
    <location>
        <begin position="1"/>
        <end position="1008"/>
    </location>
</feature>
<feature type="domain" description="PWWP" evidence="2">
    <location>
        <begin position="127"/>
        <end position="188"/>
    </location>
</feature>
<feature type="region of interest" description="Disordered" evidence="4">
    <location>
        <begin position="84"/>
        <end position="124"/>
    </location>
</feature>
<feature type="region of interest" description="Disordered" evidence="4">
    <location>
        <begin position="307"/>
        <end position="339"/>
    </location>
</feature>
<feature type="region of interest" description="Disordered" evidence="4">
    <location>
        <begin position="399"/>
        <end position="606"/>
    </location>
</feature>
<feature type="region of interest" description="Disordered" evidence="4">
    <location>
        <begin position="668"/>
        <end position="874"/>
    </location>
</feature>
<feature type="coiled-coil region" evidence="1">
    <location>
        <begin position="78"/>
        <end position="122"/>
    </location>
</feature>
<feature type="coiled-coil region" evidence="1">
    <location>
        <begin position="804"/>
        <end position="824"/>
    </location>
</feature>
<feature type="short sequence motif" description="Nuclear localization signal 1" evidence="3">
    <location>
        <begin position="786"/>
        <end position="793"/>
    </location>
</feature>
<feature type="short sequence motif" description="Nuclear localization signal 2" evidence="3">
    <location>
        <begin position="809"/>
        <end position="816"/>
    </location>
</feature>
<feature type="short sequence motif" description="Nuclear localization signal 3" evidence="3">
    <location>
        <begin position="841"/>
        <end position="848"/>
    </location>
</feature>
<feature type="compositionally biased region" description="Acidic residues" evidence="4">
    <location>
        <begin position="87"/>
        <end position="122"/>
    </location>
</feature>
<feature type="compositionally biased region" description="Acidic residues" evidence="4">
    <location>
        <begin position="321"/>
        <end position="330"/>
    </location>
</feature>
<feature type="compositionally biased region" description="Basic and acidic residues" evidence="4">
    <location>
        <begin position="399"/>
        <end position="409"/>
    </location>
</feature>
<feature type="compositionally biased region" description="Acidic residues" evidence="4">
    <location>
        <begin position="473"/>
        <end position="490"/>
    </location>
</feature>
<feature type="compositionally biased region" description="Basic and acidic residues" evidence="4">
    <location>
        <begin position="511"/>
        <end position="522"/>
    </location>
</feature>
<feature type="compositionally biased region" description="Basic and acidic residues" evidence="4">
    <location>
        <begin position="677"/>
        <end position="687"/>
    </location>
</feature>
<feature type="compositionally biased region" description="Basic and acidic residues" evidence="4">
    <location>
        <begin position="707"/>
        <end position="725"/>
    </location>
</feature>
<feature type="compositionally biased region" description="Basic residues" evidence="4">
    <location>
        <begin position="726"/>
        <end position="738"/>
    </location>
</feature>
<feature type="compositionally biased region" description="Basic and acidic residues" evidence="4">
    <location>
        <begin position="739"/>
        <end position="758"/>
    </location>
</feature>
<feature type="compositionally biased region" description="Basic and acidic residues" evidence="4">
    <location>
        <begin position="768"/>
        <end position="787"/>
    </location>
</feature>
<feature type="compositionally biased region" description="Basic and acidic residues" evidence="4">
    <location>
        <begin position="794"/>
        <end position="818"/>
    </location>
</feature>
<feature type="compositionally biased region" description="Basic residues" evidence="4">
    <location>
        <begin position="842"/>
        <end position="854"/>
    </location>
</feature>
<gene>
    <name evidence="7" type="primary">PDP3</name>
    <name evidence="9" type="ordered locus">At5g40340</name>
    <name evidence="10" type="ORF">MPO12.6</name>
</gene>
<comment type="function">
    <text evidence="6">Together with PDP1, PDP2 and PDP6, interacts with MSI4/FVE and MSI5 to suppress FLC, MAF4 and MAF5 expression by regulating the function of the PRC2 complex and modulating H3K27me3 level, thereby promoting flowering.</text>
</comment>
<comment type="subunit">
    <text evidence="5 6">Interacts with DEK3 (PubMed:25387881). Binds to LHP1, MSI4/FVE and MSI5 (PubMed:29314758). Component of the PRC2 (polycomb repressive complex 2) complex which regulates histone methylation on histone H3K27 (PubMed:29314758).</text>
</comment>
<comment type="subcellular location">
    <subcellularLocation>
        <location evidence="3">Nucleus</location>
    </subcellularLocation>
</comment>
<comment type="disruption phenotype">
    <text evidence="6">Delayed flowering associated with reduced H3K27me3 level on FLC (PubMed:29314758). The triple mutant pdp1 pdp2 pdp3 has increased levels of FLC, MAF4 and MAF5 expression, but decreased expression of FT (PubMed:29314758).</text>
</comment>
<comment type="similarity">
    <text evidence="8">Belongs to the PDP family.</text>
</comment>
<keyword id="KW-0175">Coiled coil</keyword>
<keyword id="KW-0287">Flowering</keyword>
<keyword id="KW-0539">Nucleus</keyword>
<keyword id="KW-1185">Reference proteome</keyword>
<keyword id="KW-0804">Transcription</keyword>
<keyword id="KW-0805">Transcription regulation</keyword>
<organism>
    <name type="scientific">Arabidopsis thaliana</name>
    <name type="common">Mouse-ear cress</name>
    <dbReference type="NCBI Taxonomy" id="3702"/>
    <lineage>
        <taxon>Eukaryota</taxon>
        <taxon>Viridiplantae</taxon>
        <taxon>Streptophyta</taxon>
        <taxon>Embryophyta</taxon>
        <taxon>Tracheophyta</taxon>
        <taxon>Spermatophyta</taxon>
        <taxon>Magnoliopsida</taxon>
        <taxon>eudicotyledons</taxon>
        <taxon>Gunneridae</taxon>
        <taxon>Pentapetalae</taxon>
        <taxon>rosids</taxon>
        <taxon>malvids</taxon>
        <taxon>Brassicales</taxon>
        <taxon>Brassicaceae</taxon>
        <taxon>Camelineae</taxon>
        <taxon>Arabidopsis</taxon>
    </lineage>
</organism>
<reference key="1">
    <citation type="journal article" date="1997" name="DNA Res.">
        <title>Structural analysis of Arabidopsis thaliana chromosome 5. II. Sequence features of the regions of 1,044,062 bp covered by thirteen physically assigned P1 clones.</title>
        <authorList>
            <person name="Kotani H."/>
            <person name="Nakamura Y."/>
            <person name="Sato S."/>
            <person name="Kaneko T."/>
            <person name="Asamizu E."/>
            <person name="Miyajima N."/>
            <person name="Tabata S."/>
        </authorList>
    </citation>
    <scope>NUCLEOTIDE SEQUENCE [LARGE SCALE GENOMIC DNA]</scope>
    <source>
        <strain>cv. Columbia</strain>
    </source>
</reference>
<reference key="2">
    <citation type="journal article" date="2017" name="Plant J.">
        <title>Araport11: a complete reannotation of the Arabidopsis thaliana reference genome.</title>
        <authorList>
            <person name="Cheng C.Y."/>
            <person name="Krishnakumar V."/>
            <person name="Chan A.P."/>
            <person name="Thibaud-Nissen F."/>
            <person name="Schobel S."/>
            <person name="Town C.D."/>
        </authorList>
    </citation>
    <scope>GENOME REANNOTATION</scope>
    <source>
        <strain>cv. Columbia</strain>
    </source>
</reference>
<reference key="3">
    <citation type="journal article" date="2014" name="Plant Cell">
        <title>A DEK domain-containing protein modulates chromatin structure and function in Arabidopsis.</title>
        <authorList>
            <person name="Waidmann S."/>
            <person name="Kusenda B."/>
            <person name="Mayerhofer J."/>
            <person name="Mechtler K."/>
            <person name="Jonak C."/>
        </authorList>
    </citation>
    <scope>INTERACTION WITH DEK3</scope>
    <scope>IDENTIFICATION BY MASS SPECTROMETRY</scope>
    <source>
        <strain>cv. Columbia</strain>
    </source>
</reference>
<reference key="4">
    <citation type="journal article" date="2018" name="J. Integr. Plant Biol.">
        <title>Arabidopsis PWWP domain proteins mediate H3K27 trimethylation on FLC and regulate flowering time.</title>
        <authorList>
            <person name="Zhou J.X."/>
            <person name="Liu Z.W."/>
            <person name="Li Y.Q."/>
            <person name="Li L."/>
            <person name="Wang B."/>
            <person name="Chen S."/>
            <person name="He X.J."/>
        </authorList>
    </citation>
    <scope>FUNCTION</scope>
    <scope>DISRUPTION PHENOTYPE</scope>
    <scope>INTERACTION WITH LHP1; MSI4/FVE AND MSI5</scope>
    <scope>SUBUNIT</scope>
    <scope>GENE FAMILY</scope>
    <scope>NOMENCLATURE</scope>
</reference>